<keyword id="KW-0240">DNA-directed RNA polymerase</keyword>
<keyword id="KW-0548">Nucleotidyltransferase</keyword>
<keyword id="KW-0804">Transcription</keyword>
<keyword id="KW-0808">Transferase</keyword>
<gene>
    <name evidence="1" type="primary">rpoA1</name>
    <name type="ordered locus">FTW_1733</name>
</gene>
<comment type="function">
    <text evidence="1">DNA-dependent RNA polymerase catalyzes the transcription of DNA into RNA using the four ribonucleoside triphosphates as substrates.</text>
</comment>
<comment type="catalytic activity">
    <reaction evidence="1">
        <text>RNA(n) + a ribonucleoside 5'-triphosphate = RNA(n+1) + diphosphate</text>
        <dbReference type="Rhea" id="RHEA:21248"/>
        <dbReference type="Rhea" id="RHEA-COMP:14527"/>
        <dbReference type="Rhea" id="RHEA-COMP:17342"/>
        <dbReference type="ChEBI" id="CHEBI:33019"/>
        <dbReference type="ChEBI" id="CHEBI:61557"/>
        <dbReference type="ChEBI" id="CHEBI:140395"/>
        <dbReference type="EC" id="2.7.7.6"/>
    </reaction>
</comment>
<comment type="subunit">
    <text evidence="1">Homodimer. The RNAP catalytic core consists of 2 alpha, 1 beta, 1 beta' and 1 omega subunit. When a sigma factor is associated with the core the holoenzyme is formed, which can initiate transcription.</text>
</comment>
<comment type="domain">
    <text evidence="1">The N-terminal domain is essential for RNAP assembly and basal transcription, whereas the C-terminal domain is involved in interaction with transcriptional regulators and with upstream promoter elements.</text>
</comment>
<comment type="similarity">
    <text evidence="1">Belongs to the RNA polymerase alpha chain family.</text>
</comment>
<dbReference type="EC" id="2.7.7.6" evidence="1"/>
<dbReference type="EMBL" id="CP000608">
    <property type="protein sequence ID" value="ABO47409.1"/>
    <property type="molecule type" value="Genomic_DNA"/>
</dbReference>
<dbReference type="RefSeq" id="WP_003021582.1">
    <property type="nucleotide sequence ID" value="NC_009257.1"/>
</dbReference>
<dbReference type="SMR" id="A4IZQ9"/>
<dbReference type="KEGG" id="ftw:FTW_1733"/>
<dbReference type="HOGENOM" id="CLU_053084_0_0_6"/>
<dbReference type="GO" id="GO:0005737">
    <property type="term" value="C:cytoplasm"/>
    <property type="evidence" value="ECO:0007669"/>
    <property type="project" value="UniProtKB-ARBA"/>
</dbReference>
<dbReference type="GO" id="GO:0000428">
    <property type="term" value="C:DNA-directed RNA polymerase complex"/>
    <property type="evidence" value="ECO:0007669"/>
    <property type="project" value="UniProtKB-KW"/>
</dbReference>
<dbReference type="GO" id="GO:0003677">
    <property type="term" value="F:DNA binding"/>
    <property type="evidence" value="ECO:0007669"/>
    <property type="project" value="UniProtKB-UniRule"/>
</dbReference>
<dbReference type="GO" id="GO:0003899">
    <property type="term" value="F:DNA-directed RNA polymerase activity"/>
    <property type="evidence" value="ECO:0007669"/>
    <property type="project" value="UniProtKB-UniRule"/>
</dbReference>
<dbReference type="GO" id="GO:0046983">
    <property type="term" value="F:protein dimerization activity"/>
    <property type="evidence" value="ECO:0007669"/>
    <property type="project" value="InterPro"/>
</dbReference>
<dbReference type="GO" id="GO:0006351">
    <property type="term" value="P:DNA-templated transcription"/>
    <property type="evidence" value="ECO:0007669"/>
    <property type="project" value="UniProtKB-UniRule"/>
</dbReference>
<dbReference type="CDD" id="cd06928">
    <property type="entry name" value="RNAP_alpha_NTD"/>
    <property type="match status" value="1"/>
</dbReference>
<dbReference type="FunFam" id="1.10.150.20:FF:000001">
    <property type="entry name" value="DNA-directed RNA polymerase subunit alpha"/>
    <property type="match status" value="1"/>
</dbReference>
<dbReference type="Gene3D" id="1.10.150.20">
    <property type="entry name" value="5' to 3' exonuclease, C-terminal subdomain"/>
    <property type="match status" value="1"/>
</dbReference>
<dbReference type="Gene3D" id="2.170.120.12">
    <property type="entry name" value="DNA-directed RNA polymerase, insert domain"/>
    <property type="match status" value="1"/>
</dbReference>
<dbReference type="Gene3D" id="3.30.1360.10">
    <property type="entry name" value="RNA polymerase, RBP11-like subunit"/>
    <property type="match status" value="1"/>
</dbReference>
<dbReference type="HAMAP" id="MF_00059">
    <property type="entry name" value="RNApol_bact_RpoA"/>
    <property type="match status" value="1"/>
</dbReference>
<dbReference type="InterPro" id="IPR011262">
    <property type="entry name" value="DNA-dir_RNA_pol_insert"/>
</dbReference>
<dbReference type="InterPro" id="IPR011263">
    <property type="entry name" value="DNA-dir_RNA_pol_RpoA/D/Rpb3"/>
</dbReference>
<dbReference type="InterPro" id="IPR011773">
    <property type="entry name" value="DNA-dir_RpoA"/>
</dbReference>
<dbReference type="InterPro" id="IPR036603">
    <property type="entry name" value="RBP11-like"/>
</dbReference>
<dbReference type="InterPro" id="IPR011260">
    <property type="entry name" value="RNAP_asu_C"/>
</dbReference>
<dbReference type="InterPro" id="IPR036643">
    <property type="entry name" value="RNApol_insert_sf"/>
</dbReference>
<dbReference type="NCBIfam" id="NF003513">
    <property type="entry name" value="PRK05182.1-2"/>
    <property type="match status" value="1"/>
</dbReference>
<dbReference type="NCBIfam" id="TIGR02027">
    <property type="entry name" value="rpoA"/>
    <property type="match status" value="1"/>
</dbReference>
<dbReference type="Pfam" id="PF01000">
    <property type="entry name" value="RNA_pol_A_bac"/>
    <property type="match status" value="1"/>
</dbReference>
<dbReference type="Pfam" id="PF03118">
    <property type="entry name" value="RNA_pol_A_CTD"/>
    <property type="match status" value="1"/>
</dbReference>
<dbReference type="Pfam" id="PF01193">
    <property type="entry name" value="RNA_pol_L"/>
    <property type="match status" value="1"/>
</dbReference>
<dbReference type="SMART" id="SM00662">
    <property type="entry name" value="RPOLD"/>
    <property type="match status" value="1"/>
</dbReference>
<dbReference type="SUPFAM" id="SSF47789">
    <property type="entry name" value="C-terminal domain of RNA polymerase alpha subunit"/>
    <property type="match status" value="1"/>
</dbReference>
<dbReference type="SUPFAM" id="SSF56553">
    <property type="entry name" value="Insert subdomain of RNA polymerase alpha subunit"/>
    <property type="match status" value="1"/>
</dbReference>
<dbReference type="SUPFAM" id="SSF55257">
    <property type="entry name" value="RBP11-like subunits of RNA polymerase"/>
    <property type="match status" value="1"/>
</dbReference>
<evidence type="ECO:0000255" key="1">
    <source>
        <dbReference type="HAMAP-Rule" id="MF_00059"/>
    </source>
</evidence>
<organism>
    <name type="scientific">Francisella tularensis subsp. tularensis (strain WY96-3418)</name>
    <dbReference type="NCBI Taxonomy" id="418136"/>
    <lineage>
        <taxon>Bacteria</taxon>
        <taxon>Pseudomonadati</taxon>
        <taxon>Pseudomonadota</taxon>
        <taxon>Gammaproteobacteria</taxon>
        <taxon>Thiotrichales</taxon>
        <taxon>Francisellaceae</taxon>
        <taxon>Francisella</taxon>
    </lineage>
</organism>
<reference key="1">
    <citation type="journal article" date="2007" name="PLoS ONE">
        <title>Complete genomic characterization of a pathogenic A.II strain of Francisella tularensis subspecies tularensis.</title>
        <authorList>
            <person name="Beckstrom-Sternberg S.M."/>
            <person name="Auerbach R.K."/>
            <person name="Godbole S."/>
            <person name="Pearson J.V."/>
            <person name="Beckstrom-Sternberg J.S."/>
            <person name="Deng Z."/>
            <person name="Munk C."/>
            <person name="Kubota K."/>
            <person name="Zhou Y."/>
            <person name="Bruce D."/>
            <person name="Noronha J."/>
            <person name="Scheuermann R.H."/>
            <person name="Wang A."/>
            <person name="Wei X."/>
            <person name="Wang J."/>
            <person name="Hao J."/>
            <person name="Wagner D.M."/>
            <person name="Brettin T.S."/>
            <person name="Brown N."/>
            <person name="Gilna P."/>
            <person name="Keim P.S."/>
        </authorList>
    </citation>
    <scope>NUCLEOTIDE SEQUENCE [LARGE SCALE GENOMIC DNA]</scope>
    <source>
        <strain>WY96-3418</strain>
    </source>
</reference>
<protein>
    <recommendedName>
        <fullName evidence="1">DNA-directed RNA polymerase subunit alpha 1</fullName>
        <shortName evidence="1">RNAP subunit alpha 1</shortName>
        <ecNumber evidence="1">2.7.7.6</ecNumber>
    </recommendedName>
    <alternativeName>
        <fullName evidence="1">RNA polymerase subunit alpha 1</fullName>
    </alternativeName>
    <alternativeName>
        <fullName evidence="1">Transcriptase subunit alpha 1</fullName>
    </alternativeName>
</protein>
<proteinExistence type="inferred from homology"/>
<accession>A4IZQ9</accession>
<sequence>MSNNNSKLEFVPNIQLKEDLGAFSYKVQLSPVEKGMAHILGNSIRRVLLSSLSGASIIKVNIANVLHEYSTLEDVKEDVVEIVSNLKKVAIKLDTGIDRLDLELSVNKSGVVSAGDFKTTQGVEIINKDQPIATLTNQRAFSLTATVSVGRNVGILSAIPTELERVGDIAVDADFNPIKRVAFEVFDNGDSETLEVFVKTNGTIEPLAAVTKALEYFCEQISVFVSLRVPSNGKTGDVLIDSNIDPILLKPIDDLELTVRSSNCLRAENIKYLGDLVQYSESQLMKIPNLGKKSLNEIKQILIDNNLSLGVQIDNFRELVEGK</sequence>
<name>RPOA1_FRATW</name>
<feature type="chain" id="PRO_0000296812" description="DNA-directed RNA polymerase subunit alpha 1">
    <location>
        <begin position="1"/>
        <end position="323"/>
    </location>
</feature>
<feature type="region of interest" description="Alpha N-terminal domain (alpha-NTD)" evidence="1">
    <location>
        <begin position="1"/>
        <end position="228"/>
    </location>
</feature>
<feature type="region of interest" description="Alpha C-terminal domain (alpha-CTD)" evidence="1">
    <location>
        <begin position="244"/>
        <end position="323"/>
    </location>
</feature>